<dbReference type="EC" id="2.1.2.1" evidence="1"/>
<dbReference type="EMBL" id="CP000538">
    <property type="protein sequence ID" value="EAQ73109.2"/>
    <property type="molecule type" value="Genomic_DNA"/>
</dbReference>
<dbReference type="RefSeq" id="WP_009882139.1">
    <property type="nucleotide sequence ID" value="NC_008787.1"/>
</dbReference>
<dbReference type="SMR" id="A1VYC2"/>
<dbReference type="KEGG" id="cjj:CJJ81176_0425"/>
<dbReference type="eggNOG" id="COG0112">
    <property type="taxonomic scope" value="Bacteria"/>
</dbReference>
<dbReference type="HOGENOM" id="CLU_022477_2_1_7"/>
<dbReference type="UniPathway" id="UPA00193"/>
<dbReference type="UniPathway" id="UPA00288">
    <property type="reaction ID" value="UER01023"/>
</dbReference>
<dbReference type="Proteomes" id="UP000000646">
    <property type="component" value="Chromosome"/>
</dbReference>
<dbReference type="GO" id="GO:0005829">
    <property type="term" value="C:cytosol"/>
    <property type="evidence" value="ECO:0007669"/>
    <property type="project" value="TreeGrafter"/>
</dbReference>
<dbReference type="GO" id="GO:0004372">
    <property type="term" value="F:glycine hydroxymethyltransferase activity"/>
    <property type="evidence" value="ECO:0007669"/>
    <property type="project" value="UniProtKB-UniRule"/>
</dbReference>
<dbReference type="GO" id="GO:0030170">
    <property type="term" value="F:pyridoxal phosphate binding"/>
    <property type="evidence" value="ECO:0007669"/>
    <property type="project" value="UniProtKB-UniRule"/>
</dbReference>
<dbReference type="GO" id="GO:0019264">
    <property type="term" value="P:glycine biosynthetic process from serine"/>
    <property type="evidence" value="ECO:0007669"/>
    <property type="project" value="UniProtKB-UniRule"/>
</dbReference>
<dbReference type="GO" id="GO:0035999">
    <property type="term" value="P:tetrahydrofolate interconversion"/>
    <property type="evidence" value="ECO:0007669"/>
    <property type="project" value="UniProtKB-UniRule"/>
</dbReference>
<dbReference type="CDD" id="cd00378">
    <property type="entry name" value="SHMT"/>
    <property type="match status" value="1"/>
</dbReference>
<dbReference type="FunFam" id="3.40.640.10:FF:000001">
    <property type="entry name" value="Serine hydroxymethyltransferase"/>
    <property type="match status" value="1"/>
</dbReference>
<dbReference type="Gene3D" id="3.90.1150.10">
    <property type="entry name" value="Aspartate Aminotransferase, domain 1"/>
    <property type="match status" value="1"/>
</dbReference>
<dbReference type="Gene3D" id="3.40.640.10">
    <property type="entry name" value="Type I PLP-dependent aspartate aminotransferase-like (Major domain)"/>
    <property type="match status" value="1"/>
</dbReference>
<dbReference type="HAMAP" id="MF_00051">
    <property type="entry name" value="SHMT"/>
    <property type="match status" value="1"/>
</dbReference>
<dbReference type="InterPro" id="IPR015424">
    <property type="entry name" value="PyrdxlP-dep_Trfase"/>
</dbReference>
<dbReference type="InterPro" id="IPR015421">
    <property type="entry name" value="PyrdxlP-dep_Trfase_major"/>
</dbReference>
<dbReference type="InterPro" id="IPR015422">
    <property type="entry name" value="PyrdxlP-dep_Trfase_small"/>
</dbReference>
<dbReference type="InterPro" id="IPR001085">
    <property type="entry name" value="Ser_HO-MeTrfase"/>
</dbReference>
<dbReference type="InterPro" id="IPR049943">
    <property type="entry name" value="Ser_HO-MeTrfase-like"/>
</dbReference>
<dbReference type="InterPro" id="IPR019798">
    <property type="entry name" value="Ser_HO-MeTrfase_PLP_BS"/>
</dbReference>
<dbReference type="InterPro" id="IPR039429">
    <property type="entry name" value="SHMT-like_dom"/>
</dbReference>
<dbReference type="NCBIfam" id="NF000586">
    <property type="entry name" value="PRK00011.1"/>
    <property type="match status" value="1"/>
</dbReference>
<dbReference type="PANTHER" id="PTHR11680">
    <property type="entry name" value="SERINE HYDROXYMETHYLTRANSFERASE"/>
    <property type="match status" value="1"/>
</dbReference>
<dbReference type="PANTHER" id="PTHR11680:SF50">
    <property type="entry name" value="SERINE HYDROXYMETHYLTRANSFERASE"/>
    <property type="match status" value="1"/>
</dbReference>
<dbReference type="Pfam" id="PF00464">
    <property type="entry name" value="SHMT"/>
    <property type="match status" value="1"/>
</dbReference>
<dbReference type="PIRSF" id="PIRSF000412">
    <property type="entry name" value="SHMT"/>
    <property type="match status" value="1"/>
</dbReference>
<dbReference type="SUPFAM" id="SSF53383">
    <property type="entry name" value="PLP-dependent transferases"/>
    <property type="match status" value="1"/>
</dbReference>
<dbReference type="PROSITE" id="PS00096">
    <property type="entry name" value="SHMT"/>
    <property type="match status" value="1"/>
</dbReference>
<name>GLYA_CAMJJ</name>
<evidence type="ECO:0000255" key="1">
    <source>
        <dbReference type="HAMAP-Rule" id="MF_00051"/>
    </source>
</evidence>
<proteinExistence type="inferred from homology"/>
<comment type="function">
    <text evidence="1">Catalyzes the reversible interconversion of serine and glycine with tetrahydrofolate (THF) serving as the one-carbon carrier. This reaction serves as the major source of one-carbon groups required for the biosynthesis of purines, thymidylate, methionine, and other important biomolecules. Also exhibits THF-independent aldolase activity toward beta-hydroxyamino acids, producing glycine and aldehydes, via a retro-aldol mechanism.</text>
</comment>
<comment type="catalytic activity">
    <reaction evidence="1">
        <text>(6R)-5,10-methylene-5,6,7,8-tetrahydrofolate + glycine + H2O = (6S)-5,6,7,8-tetrahydrofolate + L-serine</text>
        <dbReference type="Rhea" id="RHEA:15481"/>
        <dbReference type="ChEBI" id="CHEBI:15377"/>
        <dbReference type="ChEBI" id="CHEBI:15636"/>
        <dbReference type="ChEBI" id="CHEBI:33384"/>
        <dbReference type="ChEBI" id="CHEBI:57305"/>
        <dbReference type="ChEBI" id="CHEBI:57453"/>
        <dbReference type="EC" id="2.1.2.1"/>
    </reaction>
</comment>
<comment type="cofactor">
    <cofactor evidence="1">
        <name>pyridoxal 5'-phosphate</name>
        <dbReference type="ChEBI" id="CHEBI:597326"/>
    </cofactor>
</comment>
<comment type="pathway">
    <text evidence="1">One-carbon metabolism; tetrahydrofolate interconversion.</text>
</comment>
<comment type="pathway">
    <text evidence="1">Amino-acid biosynthesis; glycine biosynthesis; glycine from L-serine: step 1/1.</text>
</comment>
<comment type="subunit">
    <text evidence="1">Homodimer.</text>
</comment>
<comment type="subcellular location">
    <subcellularLocation>
        <location evidence="1">Cytoplasm</location>
    </subcellularLocation>
</comment>
<comment type="similarity">
    <text evidence="1">Belongs to the SHMT family.</text>
</comment>
<protein>
    <recommendedName>
        <fullName evidence="1">Serine hydroxymethyltransferase</fullName>
        <shortName evidence="1">SHMT</shortName>
        <shortName evidence="1">Serine methylase</shortName>
        <ecNumber evidence="1">2.1.2.1</ecNumber>
    </recommendedName>
</protein>
<sequence>MSLEMFDKEIFDLTNKELERQCEGLEMIASENFTLPEVMEVMGSILTNKYAEGYPGKRYYGGCEFVDEIETLAIQRCKKLFNCKFANVQPNSGSQANQGVYAALINPGDKILGMDLSHGGHLTHGAKVSSSGKMYESCFYGVELDGRIDYEKVREIAKKEKPKLIVCGASAYARVIDFAKFREIADEIGAYLFADIAHIAGLVVAGEHPSPFPYAHVVSSTTHKTLRGPRGGIIMTNDEEFAKKINSAIFPGIQGGPLMHVIAAKAVGFKFNLSDEWKIYAKQVRTNAQVLANVLMDRKFKLVSDGTDNHLVLMSFLDREFSGKDADLALGNAGITANKNTVPGEIRSPFITSGLRLGTPALTARGFKEKEMEIVSNYIADILDDINNEKLQENIKQELKKLASNFIIYERAMF</sequence>
<feature type="chain" id="PRO_1000006232" description="Serine hydroxymethyltransferase">
    <location>
        <begin position="1"/>
        <end position="414"/>
    </location>
</feature>
<feature type="binding site" evidence="1">
    <location>
        <position position="116"/>
    </location>
    <ligand>
        <name>(6S)-5,6,7,8-tetrahydrofolate</name>
        <dbReference type="ChEBI" id="CHEBI:57453"/>
    </ligand>
</feature>
<feature type="binding site" evidence="1">
    <location>
        <begin position="120"/>
        <end position="122"/>
    </location>
    <ligand>
        <name>(6S)-5,6,7,8-tetrahydrofolate</name>
        <dbReference type="ChEBI" id="CHEBI:57453"/>
    </ligand>
</feature>
<feature type="binding site" evidence="1">
    <location>
        <position position="240"/>
    </location>
    <ligand>
        <name>(6S)-5,6,7,8-tetrahydrofolate</name>
        <dbReference type="ChEBI" id="CHEBI:57453"/>
    </ligand>
</feature>
<feature type="binding site" evidence="1">
    <location>
        <begin position="348"/>
        <end position="350"/>
    </location>
    <ligand>
        <name>(6S)-5,6,7,8-tetrahydrofolate</name>
        <dbReference type="ChEBI" id="CHEBI:57453"/>
    </ligand>
</feature>
<feature type="site" description="Plays an important role in substrate specificity" evidence="1">
    <location>
        <position position="223"/>
    </location>
</feature>
<feature type="modified residue" description="N6-(pyridoxal phosphate)lysine" evidence="1">
    <location>
        <position position="224"/>
    </location>
</feature>
<reference key="1">
    <citation type="submission" date="2006-12" db="EMBL/GenBank/DDBJ databases">
        <authorList>
            <person name="Fouts D.E."/>
            <person name="Nelson K.E."/>
            <person name="Sebastian Y."/>
        </authorList>
    </citation>
    <scope>NUCLEOTIDE SEQUENCE [LARGE SCALE GENOMIC DNA]</scope>
    <source>
        <strain>81-176</strain>
    </source>
</reference>
<organism>
    <name type="scientific">Campylobacter jejuni subsp. jejuni serotype O:23/36 (strain 81-176)</name>
    <dbReference type="NCBI Taxonomy" id="354242"/>
    <lineage>
        <taxon>Bacteria</taxon>
        <taxon>Pseudomonadati</taxon>
        <taxon>Campylobacterota</taxon>
        <taxon>Epsilonproteobacteria</taxon>
        <taxon>Campylobacterales</taxon>
        <taxon>Campylobacteraceae</taxon>
        <taxon>Campylobacter</taxon>
    </lineage>
</organism>
<gene>
    <name evidence="1" type="primary">glyA</name>
    <name type="ordered locus">CJJ81176_0425</name>
</gene>
<keyword id="KW-0028">Amino-acid biosynthesis</keyword>
<keyword id="KW-0963">Cytoplasm</keyword>
<keyword id="KW-0554">One-carbon metabolism</keyword>
<keyword id="KW-0663">Pyridoxal phosphate</keyword>
<keyword id="KW-0808">Transferase</keyword>
<accession>A1VYC2</accession>